<reference key="1">
    <citation type="submission" date="2008-12" db="EMBL/GenBank/DDBJ databases">
        <title>Complete sequence of chromosome of Shewanella baltica OS223.</title>
        <authorList>
            <consortium name="US DOE Joint Genome Institute"/>
            <person name="Lucas S."/>
            <person name="Copeland A."/>
            <person name="Lapidus A."/>
            <person name="Glavina del Rio T."/>
            <person name="Dalin E."/>
            <person name="Tice H."/>
            <person name="Bruce D."/>
            <person name="Goodwin L."/>
            <person name="Pitluck S."/>
            <person name="Chertkov O."/>
            <person name="Meincke L."/>
            <person name="Brettin T."/>
            <person name="Detter J.C."/>
            <person name="Han C."/>
            <person name="Kuske C.R."/>
            <person name="Larimer F."/>
            <person name="Land M."/>
            <person name="Hauser L."/>
            <person name="Kyrpides N."/>
            <person name="Ovchinnikova G."/>
            <person name="Brettar I."/>
            <person name="Rodrigues J."/>
            <person name="Konstantinidis K."/>
            <person name="Tiedje J."/>
        </authorList>
    </citation>
    <scope>NUCLEOTIDE SEQUENCE [LARGE SCALE GENOMIC DNA]</scope>
    <source>
        <strain>OS223</strain>
    </source>
</reference>
<keyword id="KW-0067">ATP-binding</keyword>
<keyword id="KW-0963">Cytoplasm</keyword>
<keyword id="KW-1015">Disulfide bond</keyword>
<keyword id="KW-0547">Nucleotide-binding</keyword>
<keyword id="KW-0676">Redox-active center</keyword>
<keyword id="KW-0694">RNA-binding</keyword>
<keyword id="KW-0784">Thiamine biosynthesis</keyword>
<keyword id="KW-0808">Transferase</keyword>
<keyword id="KW-0820">tRNA-binding</keyword>
<protein>
    <recommendedName>
        <fullName evidence="1">tRNA sulfurtransferase</fullName>
        <ecNumber evidence="1">2.8.1.4</ecNumber>
    </recommendedName>
    <alternativeName>
        <fullName evidence="1">Sulfur carrier protein ThiS sulfurtransferase</fullName>
    </alternativeName>
    <alternativeName>
        <fullName evidence="1">Thiamine biosynthesis protein ThiI</fullName>
    </alternativeName>
    <alternativeName>
        <fullName evidence="1">tRNA 4-thiouridine synthase</fullName>
    </alternativeName>
</protein>
<sequence>MKFIVKLYPEIMMKSKPVRMRFTKMLETNIRNVLKKVDEDAKVQRQWDRIMVMVPKDKPELAQAFGERLACIPGIAHVVQVDEYSFESVDDIYQQVLPVYRDQLAGKTFCVRVKRTGDHDFNSIEVERYVGGGLNQFTDALGVRLKNPDITVNLEIERDNLYMVTKRIEGLGGFPMATQEDVLSLISGGFDSGVSSYQFIKKGARTHYCFFNLGGAQHEIGVKQVAYHLWKTYGESHKVKFISVPFEPVVAEILERIDNGQMGVVLKRMMMRTAARIADRMGIQALVTGESLGQVSSQTLTNLNVIDRCTELLILRPLIAMDKQDIINESRKIGTEDFAKSMPEYCGVISQKPTVKAVLAKVEAEEKKFSEDLIDQIIAQSVTIDIREIAEQMDTRITETETVASIDTNQVVIDIRAPEEEESKPLQIEGIEIKRIPFFKLATQFADLDKQKTYLLYCERGVMSKLQALYLIEQGYTNVKVYRP</sequence>
<organism>
    <name type="scientific">Shewanella baltica (strain OS223)</name>
    <dbReference type="NCBI Taxonomy" id="407976"/>
    <lineage>
        <taxon>Bacteria</taxon>
        <taxon>Pseudomonadati</taxon>
        <taxon>Pseudomonadota</taxon>
        <taxon>Gammaproteobacteria</taxon>
        <taxon>Alteromonadales</taxon>
        <taxon>Shewanellaceae</taxon>
        <taxon>Shewanella</taxon>
    </lineage>
</organism>
<evidence type="ECO:0000255" key="1">
    <source>
        <dbReference type="HAMAP-Rule" id="MF_00021"/>
    </source>
</evidence>
<accession>B8EAU2</accession>
<feature type="chain" id="PRO_1000196931" description="tRNA sulfurtransferase">
    <location>
        <begin position="1"/>
        <end position="484"/>
    </location>
</feature>
<feature type="domain" description="THUMP" evidence="1">
    <location>
        <begin position="63"/>
        <end position="167"/>
    </location>
</feature>
<feature type="domain" description="Rhodanese" evidence="1">
    <location>
        <begin position="406"/>
        <end position="484"/>
    </location>
</feature>
<feature type="active site" description="Cysteine persulfide intermediate" evidence="1">
    <location>
        <position position="458"/>
    </location>
</feature>
<feature type="binding site" evidence="1">
    <location>
        <begin position="185"/>
        <end position="186"/>
    </location>
    <ligand>
        <name>ATP</name>
        <dbReference type="ChEBI" id="CHEBI:30616"/>
    </ligand>
</feature>
<feature type="binding site" evidence="1">
    <location>
        <position position="267"/>
    </location>
    <ligand>
        <name>ATP</name>
        <dbReference type="ChEBI" id="CHEBI:30616"/>
    </ligand>
</feature>
<feature type="binding site" evidence="1">
    <location>
        <position position="289"/>
    </location>
    <ligand>
        <name>ATP</name>
        <dbReference type="ChEBI" id="CHEBI:30616"/>
    </ligand>
</feature>
<feature type="binding site" evidence="1">
    <location>
        <position position="298"/>
    </location>
    <ligand>
        <name>ATP</name>
        <dbReference type="ChEBI" id="CHEBI:30616"/>
    </ligand>
</feature>
<feature type="disulfide bond" description="Redox-active" evidence="1">
    <location>
        <begin position="346"/>
        <end position="458"/>
    </location>
</feature>
<dbReference type="EC" id="2.8.1.4" evidence="1"/>
<dbReference type="EMBL" id="CP001252">
    <property type="protein sequence ID" value="ACK47484.1"/>
    <property type="molecule type" value="Genomic_DNA"/>
</dbReference>
<dbReference type="RefSeq" id="WP_006080887.1">
    <property type="nucleotide sequence ID" value="NC_011663.1"/>
</dbReference>
<dbReference type="SMR" id="B8EAU2"/>
<dbReference type="GeneID" id="11771642"/>
<dbReference type="KEGG" id="sbp:Sbal223_2998"/>
<dbReference type="HOGENOM" id="CLU_037952_4_1_6"/>
<dbReference type="UniPathway" id="UPA00060"/>
<dbReference type="Proteomes" id="UP000002507">
    <property type="component" value="Chromosome"/>
</dbReference>
<dbReference type="GO" id="GO:0005829">
    <property type="term" value="C:cytosol"/>
    <property type="evidence" value="ECO:0007669"/>
    <property type="project" value="TreeGrafter"/>
</dbReference>
<dbReference type="GO" id="GO:0005524">
    <property type="term" value="F:ATP binding"/>
    <property type="evidence" value="ECO:0007669"/>
    <property type="project" value="UniProtKB-UniRule"/>
</dbReference>
<dbReference type="GO" id="GO:0004810">
    <property type="term" value="F:CCA tRNA nucleotidyltransferase activity"/>
    <property type="evidence" value="ECO:0007669"/>
    <property type="project" value="InterPro"/>
</dbReference>
<dbReference type="GO" id="GO:0000049">
    <property type="term" value="F:tRNA binding"/>
    <property type="evidence" value="ECO:0007669"/>
    <property type="project" value="UniProtKB-UniRule"/>
</dbReference>
<dbReference type="GO" id="GO:0140741">
    <property type="term" value="F:tRNA-uracil-4 sulfurtransferase activity"/>
    <property type="evidence" value="ECO:0007669"/>
    <property type="project" value="UniProtKB-EC"/>
</dbReference>
<dbReference type="GO" id="GO:0009228">
    <property type="term" value="P:thiamine biosynthetic process"/>
    <property type="evidence" value="ECO:0007669"/>
    <property type="project" value="UniProtKB-KW"/>
</dbReference>
<dbReference type="GO" id="GO:0009229">
    <property type="term" value="P:thiamine diphosphate biosynthetic process"/>
    <property type="evidence" value="ECO:0007669"/>
    <property type="project" value="UniProtKB-UniRule"/>
</dbReference>
<dbReference type="GO" id="GO:0052837">
    <property type="term" value="P:thiazole biosynthetic process"/>
    <property type="evidence" value="ECO:0007669"/>
    <property type="project" value="InterPro"/>
</dbReference>
<dbReference type="GO" id="GO:0002937">
    <property type="term" value="P:tRNA 4-thiouridine biosynthesis"/>
    <property type="evidence" value="ECO:0007669"/>
    <property type="project" value="TreeGrafter"/>
</dbReference>
<dbReference type="CDD" id="cd01712">
    <property type="entry name" value="PPase_ThiI"/>
    <property type="match status" value="1"/>
</dbReference>
<dbReference type="CDD" id="cd00158">
    <property type="entry name" value="RHOD"/>
    <property type="match status" value="1"/>
</dbReference>
<dbReference type="CDD" id="cd11716">
    <property type="entry name" value="THUMP_ThiI"/>
    <property type="match status" value="1"/>
</dbReference>
<dbReference type="FunFam" id="3.30.2130.30:FF:000002">
    <property type="entry name" value="tRNA sulfurtransferase"/>
    <property type="match status" value="1"/>
</dbReference>
<dbReference type="FunFam" id="3.40.250.10:FF:000003">
    <property type="entry name" value="tRNA sulfurtransferase"/>
    <property type="match status" value="1"/>
</dbReference>
<dbReference type="FunFam" id="3.40.50.620:FF:000029">
    <property type="entry name" value="tRNA sulfurtransferase"/>
    <property type="match status" value="1"/>
</dbReference>
<dbReference type="Gene3D" id="3.30.2130.30">
    <property type="match status" value="1"/>
</dbReference>
<dbReference type="Gene3D" id="3.40.50.620">
    <property type="entry name" value="HUPs"/>
    <property type="match status" value="1"/>
</dbReference>
<dbReference type="Gene3D" id="3.40.250.10">
    <property type="entry name" value="Rhodanese-like domain"/>
    <property type="match status" value="1"/>
</dbReference>
<dbReference type="HAMAP" id="MF_00021">
    <property type="entry name" value="ThiI"/>
    <property type="match status" value="1"/>
</dbReference>
<dbReference type="InterPro" id="IPR001763">
    <property type="entry name" value="Rhodanese-like_dom"/>
</dbReference>
<dbReference type="InterPro" id="IPR036873">
    <property type="entry name" value="Rhodanese-like_dom_sf"/>
</dbReference>
<dbReference type="InterPro" id="IPR014729">
    <property type="entry name" value="Rossmann-like_a/b/a_fold"/>
</dbReference>
<dbReference type="InterPro" id="IPR020536">
    <property type="entry name" value="ThiI_AANH"/>
</dbReference>
<dbReference type="InterPro" id="IPR054173">
    <property type="entry name" value="ThiI_fer"/>
</dbReference>
<dbReference type="InterPro" id="IPR049961">
    <property type="entry name" value="ThiI_N"/>
</dbReference>
<dbReference type="InterPro" id="IPR026340">
    <property type="entry name" value="THII_Thiazole_biosynth_dom"/>
</dbReference>
<dbReference type="InterPro" id="IPR004114">
    <property type="entry name" value="THUMP_dom"/>
</dbReference>
<dbReference type="InterPro" id="IPR049962">
    <property type="entry name" value="THUMP_ThiI"/>
</dbReference>
<dbReference type="InterPro" id="IPR003720">
    <property type="entry name" value="tRNA_STrfase"/>
</dbReference>
<dbReference type="InterPro" id="IPR050102">
    <property type="entry name" value="tRNA_sulfurtransferase_ThiI"/>
</dbReference>
<dbReference type="NCBIfam" id="TIGR04271">
    <property type="entry name" value="ThiI_C_thiazole"/>
    <property type="match status" value="1"/>
</dbReference>
<dbReference type="NCBIfam" id="TIGR00342">
    <property type="entry name" value="tRNA uracil 4-sulfurtransferase ThiI"/>
    <property type="match status" value="1"/>
</dbReference>
<dbReference type="PANTHER" id="PTHR43209">
    <property type="entry name" value="TRNA SULFURTRANSFERASE"/>
    <property type="match status" value="1"/>
</dbReference>
<dbReference type="PANTHER" id="PTHR43209:SF1">
    <property type="entry name" value="TRNA SULFURTRANSFERASE"/>
    <property type="match status" value="1"/>
</dbReference>
<dbReference type="Pfam" id="PF00581">
    <property type="entry name" value="Rhodanese"/>
    <property type="match status" value="1"/>
</dbReference>
<dbReference type="Pfam" id="PF02568">
    <property type="entry name" value="ThiI"/>
    <property type="match status" value="1"/>
</dbReference>
<dbReference type="Pfam" id="PF22025">
    <property type="entry name" value="ThiI_fer"/>
    <property type="match status" value="1"/>
</dbReference>
<dbReference type="Pfam" id="PF02926">
    <property type="entry name" value="THUMP"/>
    <property type="match status" value="1"/>
</dbReference>
<dbReference type="SMART" id="SM00981">
    <property type="entry name" value="THUMP"/>
    <property type="match status" value="1"/>
</dbReference>
<dbReference type="SUPFAM" id="SSF52402">
    <property type="entry name" value="Adenine nucleotide alpha hydrolases-like"/>
    <property type="match status" value="1"/>
</dbReference>
<dbReference type="SUPFAM" id="SSF52821">
    <property type="entry name" value="Rhodanese/Cell cycle control phosphatase"/>
    <property type="match status" value="1"/>
</dbReference>
<dbReference type="SUPFAM" id="SSF143437">
    <property type="entry name" value="THUMP domain-like"/>
    <property type="match status" value="1"/>
</dbReference>
<dbReference type="PROSITE" id="PS50206">
    <property type="entry name" value="RHODANESE_3"/>
    <property type="match status" value="1"/>
</dbReference>
<dbReference type="PROSITE" id="PS51165">
    <property type="entry name" value="THUMP"/>
    <property type="match status" value="1"/>
</dbReference>
<proteinExistence type="inferred from homology"/>
<gene>
    <name evidence="1" type="primary">thiI</name>
    <name type="ordered locus">Sbal223_2998</name>
</gene>
<name>THII_SHEB2</name>
<comment type="function">
    <text evidence="1">Catalyzes the ATP-dependent transfer of a sulfur to tRNA to produce 4-thiouridine in position 8 of tRNAs, which functions as a near-UV photosensor. Also catalyzes the transfer of sulfur to the sulfur carrier protein ThiS, forming ThiS-thiocarboxylate. This is a step in the synthesis of thiazole, in the thiamine biosynthesis pathway. The sulfur is donated as persulfide by IscS.</text>
</comment>
<comment type="catalytic activity">
    <reaction evidence="1">
        <text>[ThiI sulfur-carrier protein]-S-sulfanyl-L-cysteine + a uridine in tRNA + 2 reduced [2Fe-2S]-[ferredoxin] + ATP + H(+) = [ThiI sulfur-carrier protein]-L-cysteine + a 4-thiouridine in tRNA + 2 oxidized [2Fe-2S]-[ferredoxin] + AMP + diphosphate</text>
        <dbReference type="Rhea" id="RHEA:24176"/>
        <dbReference type="Rhea" id="RHEA-COMP:10000"/>
        <dbReference type="Rhea" id="RHEA-COMP:10001"/>
        <dbReference type="Rhea" id="RHEA-COMP:13337"/>
        <dbReference type="Rhea" id="RHEA-COMP:13338"/>
        <dbReference type="Rhea" id="RHEA-COMP:13339"/>
        <dbReference type="Rhea" id="RHEA-COMP:13340"/>
        <dbReference type="ChEBI" id="CHEBI:15378"/>
        <dbReference type="ChEBI" id="CHEBI:29950"/>
        <dbReference type="ChEBI" id="CHEBI:30616"/>
        <dbReference type="ChEBI" id="CHEBI:33019"/>
        <dbReference type="ChEBI" id="CHEBI:33737"/>
        <dbReference type="ChEBI" id="CHEBI:33738"/>
        <dbReference type="ChEBI" id="CHEBI:61963"/>
        <dbReference type="ChEBI" id="CHEBI:65315"/>
        <dbReference type="ChEBI" id="CHEBI:136798"/>
        <dbReference type="ChEBI" id="CHEBI:456215"/>
        <dbReference type="EC" id="2.8.1.4"/>
    </reaction>
</comment>
<comment type="catalytic activity">
    <reaction evidence="1">
        <text>[ThiS sulfur-carrier protein]-C-terminal Gly-Gly-AMP + S-sulfanyl-L-cysteinyl-[cysteine desulfurase] + AH2 = [ThiS sulfur-carrier protein]-C-terminal-Gly-aminoethanethioate + L-cysteinyl-[cysteine desulfurase] + A + AMP + 2 H(+)</text>
        <dbReference type="Rhea" id="RHEA:43340"/>
        <dbReference type="Rhea" id="RHEA-COMP:12157"/>
        <dbReference type="Rhea" id="RHEA-COMP:12158"/>
        <dbReference type="Rhea" id="RHEA-COMP:12910"/>
        <dbReference type="Rhea" id="RHEA-COMP:19908"/>
        <dbReference type="ChEBI" id="CHEBI:13193"/>
        <dbReference type="ChEBI" id="CHEBI:15378"/>
        <dbReference type="ChEBI" id="CHEBI:17499"/>
        <dbReference type="ChEBI" id="CHEBI:29950"/>
        <dbReference type="ChEBI" id="CHEBI:61963"/>
        <dbReference type="ChEBI" id="CHEBI:90618"/>
        <dbReference type="ChEBI" id="CHEBI:232372"/>
        <dbReference type="ChEBI" id="CHEBI:456215"/>
    </reaction>
</comment>
<comment type="pathway">
    <text evidence="1">Cofactor biosynthesis; thiamine diphosphate biosynthesis.</text>
</comment>
<comment type="subcellular location">
    <subcellularLocation>
        <location evidence="1">Cytoplasm</location>
    </subcellularLocation>
</comment>
<comment type="similarity">
    <text evidence="1">Belongs to the ThiI family.</text>
</comment>